<feature type="chain" id="PRO_1000216082" description="tRNA-splicing endonuclease">
    <location>
        <begin position="1"/>
        <end position="182"/>
    </location>
</feature>
<feature type="active site" evidence="1">
    <location>
        <position position="119"/>
    </location>
</feature>
<feature type="active site" evidence="1">
    <location>
        <position position="127"/>
    </location>
</feature>
<feature type="active site" evidence="1">
    <location>
        <position position="158"/>
    </location>
</feature>
<proteinExistence type="inferred from homology"/>
<sequence>MVKALLVGSKVLIPNVDESRYIYSTGFYGKAIGISKPKGPKDIIRPLELSLIESVYLAKKGLIKVIDKNGEVLEYEKLYEYSSKIINKFDIMYRVYEDLREKGFIVRSGVKYGADFAVYTLGPGLEHAPYVVIAVDIDEEITPHELLSFGRVSHSTRKRLVLALVDRKSESVRYIMFKWVKM</sequence>
<keyword id="KW-0456">Lyase</keyword>
<keyword id="KW-0819">tRNA processing</keyword>
<dbReference type="EC" id="4.6.1.16" evidence="1"/>
<dbReference type="EMBL" id="CP001400">
    <property type="protein sequence ID" value="ACP38415.1"/>
    <property type="molecule type" value="Genomic_DNA"/>
</dbReference>
<dbReference type="RefSeq" id="WP_012711646.1">
    <property type="nucleotide sequence ID" value="NC_012588.1"/>
</dbReference>
<dbReference type="SMR" id="C3MWW5"/>
<dbReference type="GeneID" id="84059072"/>
<dbReference type="KEGG" id="sia:M1425_1666"/>
<dbReference type="HOGENOM" id="CLU_114393_0_0_2"/>
<dbReference type="Proteomes" id="UP000001350">
    <property type="component" value="Chromosome"/>
</dbReference>
<dbReference type="GO" id="GO:0005737">
    <property type="term" value="C:cytoplasm"/>
    <property type="evidence" value="ECO:0007669"/>
    <property type="project" value="TreeGrafter"/>
</dbReference>
<dbReference type="GO" id="GO:0016829">
    <property type="term" value="F:lyase activity"/>
    <property type="evidence" value="ECO:0007669"/>
    <property type="project" value="UniProtKB-KW"/>
</dbReference>
<dbReference type="GO" id="GO:0003676">
    <property type="term" value="F:nucleic acid binding"/>
    <property type="evidence" value="ECO:0007669"/>
    <property type="project" value="InterPro"/>
</dbReference>
<dbReference type="GO" id="GO:0000213">
    <property type="term" value="F:tRNA-intron endonuclease activity"/>
    <property type="evidence" value="ECO:0007669"/>
    <property type="project" value="UniProtKB-UniRule"/>
</dbReference>
<dbReference type="GO" id="GO:0006388">
    <property type="term" value="P:tRNA splicing, via endonucleolytic cleavage and ligation"/>
    <property type="evidence" value="ECO:0007669"/>
    <property type="project" value="UniProtKB-UniRule"/>
</dbReference>
<dbReference type="CDD" id="cd22363">
    <property type="entry name" value="tRNA-intron_lyase_C"/>
    <property type="match status" value="1"/>
</dbReference>
<dbReference type="FunFam" id="3.40.1350.10:FF:000006">
    <property type="entry name" value="tRNA-splicing endonuclease"/>
    <property type="match status" value="1"/>
</dbReference>
<dbReference type="Gene3D" id="3.40.1350.10">
    <property type="match status" value="1"/>
</dbReference>
<dbReference type="Gene3D" id="3.40.1170.20">
    <property type="entry name" value="tRNA intron endonuclease, N-terminal domain"/>
    <property type="match status" value="1"/>
</dbReference>
<dbReference type="HAMAP" id="MF_01833">
    <property type="entry name" value="EndA_short"/>
    <property type="match status" value="1"/>
</dbReference>
<dbReference type="InterPro" id="IPR011856">
    <property type="entry name" value="tRNA_endonuc-like_dom_sf"/>
</dbReference>
<dbReference type="InterPro" id="IPR036167">
    <property type="entry name" value="tRNA_intron_Endo_cat-like_sf"/>
</dbReference>
<dbReference type="InterPro" id="IPR006677">
    <property type="entry name" value="tRNA_intron_Endonuc_cat-like"/>
</dbReference>
<dbReference type="InterPro" id="IPR006678">
    <property type="entry name" value="tRNA_intron_Endonuc_N"/>
</dbReference>
<dbReference type="InterPro" id="IPR036740">
    <property type="entry name" value="tRNA_intron_Endonuc_N_sf"/>
</dbReference>
<dbReference type="InterPro" id="IPR006676">
    <property type="entry name" value="tRNA_splic"/>
</dbReference>
<dbReference type="InterPro" id="IPR016442">
    <property type="entry name" value="tRNA_splic_arch_short"/>
</dbReference>
<dbReference type="NCBIfam" id="TIGR00324">
    <property type="entry name" value="endA"/>
    <property type="match status" value="1"/>
</dbReference>
<dbReference type="PANTHER" id="PTHR21227">
    <property type="entry name" value="TRNA-SPLICING ENDONUCLEASE SUBUNIT SEN2"/>
    <property type="match status" value="1"/>
</dbReference>
<dbReference type="PANTHER" id="PTHR21227:SF0">
    <property type="entry name" value="TRNA-SPLICING ENDONUCLEASE SUBUNIT SEN2"/>
    <property type="match status" value="1"/>
</dbReference>
<dbReference type="Pfam" id="PF01974">
    <property type="entry name" value="tRNA_int_endo"/>
    <property type="match status" value="1"/>
</dbReference>
<dbReference type="Pfam" id="PF02778">
    <property type="entry name" value="tRNA_int_endo_N"/>
    <property type="match status" value="1"/>
</dbReference>
<dbReference type="PIRSF" id="PIRSF005285">
    <property type="entry name" value="tRNA_splic_archaea"/>
    <property type="match status" value="1"/>
</dbReference>
<dbReference type="SUPFAM" id="SSF53032">
    <property type="entry name" value="tRNA-intron endonuclease catalytic domain-like"/>
    <property type="match status" value="1"/>
</dbReference>
<dbReference type="SUPFAM" id="SSF55267">
    <property type="entry name" value="tRNA-intron endonuclease N-terminal domain-like"/>
    <property type="match status" value="1"/>
</dbReference>
<reference key="1">
    <citation type="journal article" date="2009" name="Proc. Natl. Acad. Sci. U.S.A.">
        <title>Biogeography of the Sulfolobus islandicus pan-genome.</title>
        <authorList>
            <person name="Reno M.L."/>
            <person name="Held N.L."/>
            <person name="Fields C.J."/>
            <person name="Burke P.V."/>
            <person name="Whitaker R.J."/>
        </authorList>
    </citation>
    <scope>NUCLEOTIDE SEQUENCE [LARGE SCALE GENOMIC DNA]</scope>
    <source>
        <strain>M.14.25 / Kamchatka #1</strain>
    </source>
</reference>
<evidence type="ECO:0000255" key="1">
    <source>
        <dbReference type="HAMAP-Rule" id="MF_01833"/>
    </source>
</evidence>
<protein>
    <recommendedName>
        <fullName evidence="1">tRNA-splicing endonuclease</fullName>
        <ecNumber evidence="1">4.6.1.16</ecNumber>
    </recommendedName>
    <alternativeName>
        <fullName evidence="1">tRNA-intron endonuclease</fullName>
    </alternativeName>
</protein>
<accession>C3MWW5</accession>
<comment type="function">
    <text evidence="1">Endonuclease that removes tRNA introns. Cleaves pre-tRNA at the 5'- and 3'-splice sites to release the intron. The products are an intron and two tRNA half-molecules bearing 2',3' cyclic phosphate and 5'-OH termini. Recognizes a pseudosymmetric substrate in which 2 bulged loops of 3 bases are separated by a stem of 4 bp.</text>
</comment>
<comment type="catalytic activity">
    <reaction evidence="1">
        <text>pretRNA = a 3'-half-tRNA molecule with a 5'-OH end + a 5'-half-tRNA molecule with a 2',3'-cyclic phosphate end + an intron with a 2',3'-cyclic phosphate and a 5'-hydroxyl terminus.</text>
        <dbReference type="EC" id="4.6.1.16"/>
    </reaction>
</comment>
<comment type="subunit">
    <text evidence="1">Homotetramer; although the tetramer contains four active sites, only two participate in the cleavage. Therefore, it should be considered as a dimer of dimers.</text>
</comment>
<comment type="similarity">
    <text evidence="1">Belongs to the tRNA-intron endonuclease family. Archaeal short subfamily.</text>
</comment>
<organism>
    <name type="scientific">Saccharolobus islandicus (strain M.14.25 / Kamchatka #1)</name>
    <name type="common">Sulfolobus islandicus</name>
    <dbReference type="NCBI Taxonomy" id="427317"/>
    <lineage>
        <taxon>Archaea</taxon>
        <taxon>Thermoproteota</taxon>
        <taxon>Thermoprotei</taxon>
        <taxon>Sulfolobales</taxon>
        <taxon>Sulfolobaceae</taxon>
        <taxon>Saccharolobus</taxon>
    </lineage>
</organism>
<name>ENDA_SACI4</name>
<gene>
    <name evidence="1" type="primary">endA</name>
    <name type="ordered locus">M1425_1666</name>
</gene>